<geneLocation type="mitochondrion"/>
<dbReference type="EC" id="7.1.1.2"/>
<dbReference type="EMBL" id="U41288">
    <property type="protein sequence ID" value="AAC49240.1"/>
    <property type="molecule type" value="Genomic_DNA"/>
</dbReference>
<dbReference type="PIR" id="S63657">
    <property type="entry name" value="S63657"/>
</dbReference>
<dbReference type="RefSeq" id="NP_043739.1">
    <property type="nucleotide sequence ID" value="NC_001715.1"/>
</dbReference>
<dbReference type="SMR" id="Q37399"/>
<dbReference type="GeneID" id="801838"/>
<dbReference type="VEuPathDB" id="FungiDB:AlmafMp20"/>
<dbReference type="GO" id="GO:0031966">
    <property type="term" value="C:mitochondrial membrane"/>
    <property type="evidence" value="ECO:0007669"/>
    <property type="project" value="UniProtKB-SubCell"/>
</dbReference>
<dbReference type="GO" id="GO:0030964">
    <property type="term" value="C:NADH dehydrogenase complex"/>
    <property type="evidence" value="ECO:0007669"/>
    <property type="project" value="TreeGrafter"/>
</dbReference>
<dbReference type="GO" id="GO:0008137">
    <property type="term" value="F:NADH dehydrogenase (ubiquinone) activity"/>
    <property type="evidence" value="ECO:0007669"/>
    <property type="project" value="UniProtKB-EC"/>
</dbReference>
<dbReference type="FunFam" id="1.20.58.1610:FF:000004">
    <property type="entry name" value="NADH-quinone oxidoreductase subunit A"/>
    <property type="match status" value="1"/>
</dbReference>
<dbReference type="Gene3D" id="1.20.58.1610">
    <property type="entry name" value="NADH:ubiquinone/plastoquinone oxidoreductase, chain 3"/>
    <property type="match status" value="1"/>
</dbReference>
<dbReference type="InterPro" id="IPR000440">
    <property type="entry name" value="NADH_UbQ/plastoQ_OxRdtase_su3"/>
</dbReference>
<dbReference type="InterPro" id="IPR038430">
    <property type="entry name" value="NDAH_ubi_oxred_su3_sf"/>
</dbReference>
<dbReference type="PANTHER" id="PTHR11058">
    <property type="entry name" value="NADH-UBIQUINONE OXIDOREDUCTASE CHAIN 3"/>
    <property type="match status" value="1"/>
</dbReference>
<dbReference type="PANTHER" id="PTHR11058:SF9">
    <property type="entry name" value="NADH-UBIQUINONE OXIDOREDUCTASE CHAIN 3"/>
    <property type="match status" value="1"/>
</dbReference>
<dbReference type="Pfam" id="PF00507">
    <property type="entry name" value="Oxidored_q4"/>
    <property type="match status" value="1"/>
</dbReference>
<evidence type="ECO:0000250" key="1"/>
<evidence type="ECO:0000255" key="2"/>
<evidence type="ECO:0000305" key="3"/>
<gene>
    <name type="primary">ND3</name>
    <name type="synonym">NAD3</name>
</gene>
<keyword id="KW-0249">Electron transport</keyword>
<keyword id="KW-0472">Membrane</keyword>
<keyword id="KW-0496">Mitochondrion</keyword>
<keyword id="KW-0520">NAD</keyword>
<keyword id="KW-0679">Respiratory chain</keyword>
<keyword id="KW-1278">Translocase</keyword>
<keyword id="KW-0812">Transmembrane</keyword>
<keyword id="KW-1133">Transmembrane helix</keyword>
<keyword id="KW-0813">Transport</keyword>
<keyword id="KW-0830">Ubiquinone</keyword>
<sequence>MTYLVYIVFTIVLTVGLILVSYLLSQAQPDSEKVSAYECGFSPLGDARQKFDVSFYLIAILFIIFDLEVVFILPFASVIHNVSLLGGWITIIFLVILTIGFIYEFVSGAITDSF</sequence>
<accession>Q37399</accession>
<organism>
    <name type="scientific">Allomyces macrogynus</name>
    <dbReference type="NCBI Taxonomy" id="28583"/>
    <lineage>
        <taxon>Eukaryota</taxon>
        <taxon>Fungi</taxon>
        <taxon>Fungi incertae sedis</taxon>
        <taxon>Blastocladiomycota</taxon>
        <taxon>Blastocladiomycetes</taxon>
        <taxon>Blastocladiales</taxon>
        <taxon>Blastocladiaceae</taxon>
        <taxon>Allomyces</taxon>
    </lineage>
</organism>
<protein>
    <recommendedName>
        <fullName>NADH-ubiquinone oxidoreductase chain 3</fullName>
        <ecNumber>7.1.1.2</ecNumber>
    </recommendedName>
    <alternativeName>
        <fullName>NADH dehydrogenase subunit 3</fullName>
    </alternativeName>
</protein>
<proteinExistence type="inferred from homology"/>
<comment type="function">
    <text evidence="1">Core subunit of the mitochondrial membrane respiratory chain NADH dehydrogenase (Complex I) that is believed to belong to the minimal assembly required for catalysis. Complex I functions in the transfer of electrons from NADH to the respiratory chain. The immediate electron acceptor for the enzyme is believed to be ubiquinone (By similarity).</text>
</comment>
<comment type="catalytic activity">
    <reaction>
        <text>a ubiquinone + NADH + 5 H(+)(in) = a ubiquinol + NAD(+) + 4 H(+)(out)</text>
        <dbReference type="Rhea" id="RHEA:29091"/>
        <dbReference type="Rhea" id="RHEA-COMP:9565"/>
        <dbReference type="Rhea" id="RHEA-COMP:9566"/>
        <dbReference type="ChEBI" id="CHEBI:15378"/>
        <dbReference type="ChEBI" id="CHEBI:16389"/>
        <dbReference type="ChEBI" id="CHEBI:17976"/>
        <dbReference type="ChEBI" id="CHEBI:57540"/>
        <dbReference type="ChEBI" id="CHEBI:57945"/>
        <dbReference type="EC" id="7.1.1.2"/>
    </reaction>
</comment>
<comment type="subcellular location">
    <subcellularLocation>
        <location evidence="1">Mitochondrion membrane</location>
        <topology evidence="1">Multi-pass membrane protein</topology>
    </subcellularLocation>
</comment>
<comment type="similarity">
    <text evidence="3">Belongs to the complex I subunit 3 family.</text>
</comment>
<feature type="chain" id="PRO_0000117702" description="NADH-ubiquinone oxidoreductase chain 3">
    <location>
        <begin position="1"/>
        <end position="114"/>
    </location>
</feature>
<feature type="transmembrane region" description="Helical" evidence="2">
    <location>
        <begin position="4"/>
        <end position="24"/>
    </location>
</feature>
<feature type="transmembrane region" description="Helical" evidence="2">
    <location>
        <begin position="55"/>
        <end position="75"/>
    </location>
</feature>
<feature type="transmembrane region" description="Helical" evidence="2">
    <location>
        <begin position="82"/>
        <end position="102"/>
    </location>
</feature>
<name>NU3M_ALLMA</name>
<reference key="1">
    <citation type="journal article" date="1996" name="J. Mol. Biol.">
        <title>The mitochondrial DNA of Allomyces macrogynus: the complete genomic sequence from an ancestral fungus.</title>
        <authorList>
            <person name="Paquin B."/>
            <person name="Lang B.F."/>
        </authorList>
    </citation>
    <scope>NUCLEOTIDE SEQUENCE [GENOMIC DNA]</scope>
    <source>
        <strain>ATCC 46923 / Burma 3-35 (35OC)</strain>
    </source>
</reference>